<gene>
    <name evidence="1" type="primary">rpl3</name>
    <name type="ordered locus">MM_2124</name>
</gene>
<sequence>MASIHRPKRGSLAFSPRKRAKSHIPRFRAWPEATGEPKLQSFAGYKVGMTHVIMVDDIKNSLTQGMEISVPVTVIETPAIRVAAVRAYTEDSTGEKAIAEAWAADLDSELKRRIPIPAAGNQAEGLENIGKLIEEGRVSDIRAVTYTLPKSLTGVPKKVPDIMESGISAKDLGAKFEYAKSILGNLVNVTDVFKNGTVVDTAAITIGKGTQGPVKRWGIQLQKGKHSRQGSLRQIGTLGSFNPSRVSWRVPQMGQMGYHQRTEFNKRILKIGSDGEEVTPEGGFINYGLVRGDYVLIKGSVPGPSKRLIRLRDPIRAKKADLGEPNILYISRESKQG</sequence>
<comment type="function">
    <text evidence="1">One of the primary rRNA binding proteins, it binds directly near the 3'-end of the 23S rRNA, where it nucleates assembly of the 50S subunit.</text>
</comment>
<comment type="subunit">
    <text evidence="1">Part of the 50S ribosomal subunit. Forms a cluster with proteins L14 and L24e.</text>
</comment>
<comment type="similarity">
    <text evidence="1">Belongs to the universal ribosomal protein uL3 family.</text>
</comment>
<reference key="1">
    <citation type="journal article" date="2002" name="J. Mol. Microbiol. Biotechnol.">
        <title>The genome of Methanosarcina mazei: evidence for lateral gene transfer between Bacteria and Archaea.</title>
        <authorList>
            <person name="Deppenmeier U."/>
            <person name="Johann A."/>
            <person name="Hartsch T."/>
            <person name="Merkl R."/>
            <person name="Schmitz R.A."/>
            <person name="Martinez-Arias R."/>
            <person name="Henne A."/>
            <person name="Wiezer A."/>
            <person name="Baeumer S."/>
            <person name="Jacobi C."/>
            <person name="Brueggemann H."/>
            <person name="Lienard T."/>
            <person name="Christmann A."/>
            <person name="Boemecke M."/>
            <person name="Steckel S."/>
            <person name="Bhattacharyya A."/>
            <person name="Lykidis A."/>
            <person name="Overbeek R."/>
            <person name="Klenk H.-P."/>
            <person name="Gunsalus R.P."/>
            <person name="Fritz H.-J."/>
            <person name="Gottschalk G."/>
        </authorList>
    </citation>
    <scope>NUCLEOTIDE SEQUENCE [LARGE SCALE GENOMIC DNA]</scope>
    <source>
        <strain>ATCC BAA-159 / DSM 3647 / Goe1 / Go1 / JCM 11833 / OCM 88</strain>
    </source>
</reference>
<feature type="chain" id="PRO_0000077212" description="Large ribosomal subunit protein uL3">
    <location>
        <begin position="1"/>
        <end position="337"/>
    </location>
</feature>
<feature type="region of interest" description="Disordered" evidence="2">
    <location>
        <begin position="1"/>
        <end position="20"/>
    </location>
</feature>
<proteinExistence type="inferred from homology"/>
<name>RL3_METMA</name>
<accession>Q8PV50</accession>
<protein>
    <recommendedName>
        <fullName evidence="1">Large ribosomal subunit protein uL3</fullName>
    </recommendedName>
    <alternativeName>
        <fullName evidence="3">50S ribosomal protein L3</fullName>
    </alternativeName>
</protein>
<keyword id="KW-0687">Ribonucleoprotein</keyword>
<keyword id="KW-0689">Ribosomal protein</keyword>
<keyword id="KW-0694">RNA-binding</keyword>
<keyword id="KW-0699">rRNA-binding</keyword>
<evidence type="ECO:0000255" key="1">
    <source>
        <dbReference type="HAMAP-Rule" id="MF_01325"/>
    </source>
</evidence>
<evidence type="ECO:0000256" key="2">
    <source>
        <dbReference type="SAM" id="MobiDB-lite"/>
    </source>
</evidence>
<evidence type="ECO:0000305" key="3"/>
<organism>
    <name type="scientific">Methanosarcina mazei (strain ATCC BAA-159 / DSM 3647 / Goe1 / Go1 / JCM 11833 / OCM 88)</name>
    <name type="common">Methanosarcina frisia</name>
    <dbReference type="NCBI Taxonomy" id="192952"/>
    <lineage>
        <taxon>Archaea</taxon>
        <taxon>Methanobacteriati</taxon>
        <taxon>Methanobacteriota</taxon>
        <taxon>Stenosarchaea group</taxon>
        <taxon>Methanomicrobia</taxon>
        <taxon>Methanosarcinales</taxon>
        <taxon>Methanosarcinaceae</taxon>
        <taxon>Methanosarcina</taxon>
    </lineage>
</organism>
<dbReference type="EMBL" id="AE008384">
    <property type="protein sequence ID" value="AAM31820.1"/>
    <property type="molecule type" value="Genomic_DNA"/>
</dbReference>
<dbReference type="RefSeq" id="WP_011034055.1">
    <property type="nucleotide sequence ID" value="NC_003901.1"/>
</dbReference>
<dbReference type="SMR" id="Q8PV50"/>
<dbReference type="GeneID" id="1480466"/>
<dbReference type="KEGG" id="mma:MM_2124"/>
<dbReference type="PATRIC" id="fig|192952.21.peg.2438"/>
<dbReference type="eggNOG" id="arCOG04070">
    <property type="taxonomic scope" value="Archaea"/>
</dbReference>
<dbReference type="HOGENOM" id="CLU_033361_2_0_2"/>
<dbReference type="Proteomes" id="UP000000595">
    <property type="component" value="Chromosome"/>
</dbReference>
<dbReference type="GO" id="GO:0022625">
    <property type="term" value="C:cytosolic large ribosomal subunit"/>
    <property type="evidence" value="ECO:0007669"/>
    <property type="project" value="TreeGrafter"/>
</dbReference>
<dbReference type="GO" id="GO:0019843">
    <property type="term" value="F:rRNA binding"/>
    <property type="evidence" value="ECO:0007669"/>
    <property type="project" value="UniProtKB-UniRule"/>
</dbReference>
<dbReference type="GO" id="GO:0003735">
    <property type="term" value="F:structural constituent of ribosome"/>
    <property type="evidence" value="ECO:0007669"/>
    <property type="project" value="InterPro"/>
</dbReference>
<dbReference type="GO" id="GO:0006412">
    <property type="term" value="P:translation"/>
    <property type="evidence" value="ECO:0007669"/>
    <property type="project" value="UniProtKB-UniRule"/>
</dbReference>
<dbReference type="Gene3D" id="3.30.1430.10">
    <property type="match status" value="1"/>
</dbReference>
<dbReference type="Gene3D" id="4.10.960.10">
    <property type="entry name" value="Ribosomal protein L3, domain 3"/>
    <property type="match status" value="1"/>
</dbReference>
<dbReference type="Gene3D" id="2.40.30.10">
    <property type="entry name" value="Translation factors"/>
    <property type="match status" value="1"/>
</dbReference>
<dbReference type="HAMAP" id="MF_01325_A">
    <property type="entry name" value="Ribosomal_uL3_A"/>
    <property type="match status" value="1"/>
</dbReference>
<dbReference type="InterPro" id="IPR045077">
    <property type="entry name" value="L3_arc_euk"/>
</dbReference>
<dbReference type="InterPro" id="IPR044892">
    <property type="entry name" value="Ribosomal_L3_dom_3_arc_sf"/>
</dbReference>
<dbReference type="InterPro" id="IPR000597">
    <property type="entry name" value="Ribosomal_uL3"/>
</dbReference>
<dbReference type="InterPro" id="IPR019928">
    <property type="entry name" value="Ribosomal_uL3_arc"/>
</dbReference>
<dbReference type="InterPro" id="IPR019926">
    <property type="entry name" value="Ribosomal_uL3_CS"/>
</dbReference>
<dbReference type="InterPro" id="IPR009000">
    <property type="entry name" value="Transl_B-barrel_sf"/>
</dbReference>
<dbReference type="NCBIfam" id="TIGR03626">
    <property type="entry name" value="L3_arch"/>
    <property type="match status" value="1"/>
</dbReference>
<dbReference type="NCBIfam" id="NF003261">
    <property type="entry name" value="PRK04231.1"/>
    <property type="match status" value="1"/>
</dbReference>
<dbReference type="PANTHER" id="PTHR11363">
    <property type="entry name" value="60S RIBOSOMAL PROTEIN L3-RELATED"/>
    <property type="match status" value="1"/>
</dbReference>
<dbReference type="PANTHER" id="PTHR11363:SF5">
    <property type="entry name" value="LARGE RIBOSOMAL SUBUNIT PROTEIN UL3"/>
    <property type="match status" value="1"/>
</dbReference>
<dbReference type="Pfam" id="PF00297">
    <property type="entry name" value="Ribosomal_L3"/>
    <property type="match status" value="1"/>
</dbReference>
<dbReference type="SUPFAM" id="SSF50447">
    <property type="entry name" value="Translation proteins"/>
    <property type="match status" value="1"/>
</dbReference>
<dbReference type="PROSITE" id="PS00474">
    <property type="entry name" value="RIBOSOMAL_L3"/>
    <property type="match status" value="1"/>
</dbReference>